<sequence length="99" mass="10835">MPAVIDKALDFIGAMDVSAPTPSSMNESTAKGIFKYLKELGVPASAADITARADQEGWNPGFTEKMVGWAKKMETGERSVIKNPEYFSTYMQEELKALV</sequence>
<keyword id="KW-1185">Reference proteome</keyword>
<evidence type="ECO:0000305" key="1"/>
<organism>
    <name type="scientific">Escherichia coli (strain K12)</name>
    <dbReference type="NCBI Taxonomy" id="83333"/>
    <lineage>
        <taxon>Bacteria</taxon>
        <taxon>Pseudomonadati</taxon>
        <taxon>Pseudomonadota</taxon>
        <taxon>Gammaproteobacteria</taxon>
        <taxon>Enterobacterales</taxon>
        <taxon>Enterobacteriaceae</taxon>
        <taxon>Escherichia</taxon>
    </lineage>
</organism>
<protein>
    <recommendedName>
        <fullName>Uncharacterized protein YoaC</fullName>
    </recommendedName>
</protein>
<feature type="chain" id="PRO_0000169030" description="Uncharacterized protein YoaC">
    <location>
        <begin position="1"/>
        <end position="99"/>
    </location>
</feature>
<accession>P64490</accession>
<accession>P76259</accession>
<accession>Q2MB22</accession>
<name>YOAC_ECOLI</name>
<comment type="sequence caution" evidence="1">
    <conflict type="erroneous initiation">
        <sequence resource="EMBL-CDS" id="BAE76534"/>
    </conflict>
</comment>
<reference key="1">
    <citation type="journal article" date="1997" name="Science">
        <title>The complete genome sequence of Escherichia coli K-12.</title>
        <authorList>
            <person name="Blattner F.R."/>
            <person name="Plunkett G. III"/>
            <person name="Bloch C.A."/>
            <person name="Perna N.T."/>
            <person name="Burland V."/>
            <person name="Riley M."/>
            <person name="Collado-Vides J."/>
            <person name="Glasner J.D."/>
            <person name="Rode C.K."/>
            <person name="Mayhew G.F."/>
            <person name="Gregor J."/>
            <person name="Davis N.W."/>
            <person name="Kirkpatrick H.A."/>
            <person name="Goeden M.A."/>
            <person name="Rose D.J."/>
            <person name="Mau B."/>
            <person name="Shao Y."/>
        </authorList>
    </citation>
    <scope>NUCLEOTIDE SEQUENCE [LARGE SCALE GENOMIC DNA]</scope>
    <source>
        <strain>K12 / MG1655 / ATCC 47076</strain>
    </source>
</reference>
<reference key="2">
    <citation type="journal article" date="2006" name="Mol. Syst. Biol.">
        <title>Highly accurate genome sequences of Escherichia coli K-12 strains MG1655 and W3110.</title>
        <authorList>
            <person name="Hayashi K."/>
            <person name="Morooka N."/>
            <person name="Yamamoto Y."/>
            <person name="Fujita K."/>
            <person name="Isono K."/>
            <person name="Choi S."/>
            <person name="Ohtsubo E."/>
            <person name="Baba T."/>
            <person name="Wanner B.L."/>
            <person name="Mori H."/>
            <person name="Horiuchi T."/>
        </authorList>
    </citation>
    <scope>NUCLEOTIDE SEQUENCE [LARGE SCALE GENOMIC DNA]</scope>
    <source>
        <strain>K12 / W3110 / ATCC 27325 / DSM 5911</strain>
    </source>
</reference>
<proteinExistence type="predicted"/>
<dbReference type="EMBL" id="U00096">
    <property type="protein sequence ID" value="AAC74880.2"/>
    <property type="molecule type" value="Genomic_DNA"/>
</dbReference>
<dbReference type="EMBL" id="AP009048">
    <property type="protein sequence ID" value="BAE76534.1"/>
    <property type="status" value="ALT_INIT"/>
    <property type="molecule type" value="Genomic_DNA"/>
</dbReference>
<dbReference type="PIR" id="B64942">
    <property type="entry name" value="B64942"/>
</dbReference>
<dbReference type="RefSeq" id="NP_416324.2">
    <property type="nucleotide sequence ID" value="NC_000913.3"/>
</dbReference>
<dbReference type="RefSeq" id="WP_001111995.1">
    <property type="nucleotide sequence ID" value="NZ_SSZK01000001.1"/>
</dbReference>
<dbReference type="SMR" id="P64490"/>
<dbReference type="BioGRID" id="4260343">
    <property type="interactions" value="147"/>
</dbReference>
<dbReference type="FunCoup" id="P64490">
    <property type="interactions" value="5"/>
</dbReference>
<dbReference type="STRING" id="511145.b1810"/>
<dbReference type="jPOST" id="P64490"/>
<dbReference type="PaxDb" id="511145-b1810"/>
<dbReference type="EnsemblBacteria" id="AAC74880">
    <property type="protein sequence ID" value="AAC74880"/>
    <property type="gene ID" value="b1810"/>
</dbReference>
<dbReference type="GeneID" id="946308"/>
<dbReference type="KEGG" id="ecj:JW5296"/>
<dbReference type="KEGG" id="eco:b1810"/>
<dbReference type="KEGG" id="ecoc:C3026_10310"/>
<dbReference type="PATRIC" id="fig|511145.12.peg.1887"/>
<dbReference type="EchoBASE" id="EB3288"/>
<dbReference type="eggNOG" id="ENOG5032UHS">
    <property type="taxonomic scope" value="Bacteria"/>
</dbReference>
<dbReference type="HOGENOM" id="CLU_175366_0_0_6"/>
<dbReference type="InParanoid" id="P64490"/>
<dbReference type="PhylomeDB" id="P64490"/>
<dbReference type="BioCyc" id="EcoCyc:G6994-MONOMER"/>
<dbReference type="PRO" id="PR:P64490"/>
<dbReference type="Proteomes" id="UP000000625">
    <property type="component" value="Chromosome"/>
</dbReference>
<dbReference type="Gene3D" id="1.20.1290.30">
    <property type="match status" value="1"/>
</dbReference>
<dbReference type="InterPro" id="IPR015079">
    <property type="entry name" value="DUF1889"/>
</dbReference>
<dbReference type="InterPro" id="IPR037210">
    <property type="entry name" value="YoaC-like_sf"/>
</dbReference>
<dbReference type="Pfam" id="PF08986">
    <property type="entry name" value="DUF1889"/>
    <property type="match status" value="1"/>
</dbReference>
<dbReference type="SUPFAM" id="SSF140670">
    <property type="entry name" value="YoaC-like"/>
    <property type="match status" value="1"/>
</dbReference>
<gene>
    <name type="primary">yoaC</name>
    <name type="ordered locus">b1810</name>
    <name type="ordered locus">JW5296</name>
</gene>